<organism>
    <name type="scientific">Aromatoleum aromaticum (strain DSM 19018 / LMG 30748 / EbN1)</name>
    <name type="common">Azoarcus sp. (strain EbN1)</name>
    <dbReference type="NCBI Taxonomy" id="76114"/>
    <lineage>
        <taxon>Bacteria</taxon>
        <taxon>Pseudomonadati</taxon>
        <taxon>Pseudomonadota</taxon>
        <taxon>Betaproteobacteria</taxon>
        <taxon>Rhodocyclales</taxon>
        <taxon>Rhodocyclaceae</taxon>
        <taxon>Aromatoleum</taxon>
    </lineage>
</organism>
<reference key="1">
    <citation type="journal article" date="2005" name="Arch. Microbiol.">
        <title>The genome sequence of an anaerobic aromatic-degrading denitrifying bacterium, strain EbN1.</title>
        <authorList>
            <person name="Rabus R."/>
            <person name="Kube M."/>
            <person name="Heider J."/>
            <person name="Beck A."/>
            <person name="Heitmann K."/>
            <person name="Widdel F."/>
            <person name="Reinhardt R."/>
        </authorList>
    </citation>
    <scope>NUCLEOTIDE SEQUENCE [LARGE SCALE GENOMIC DNA]</scope>
    <source>
        <strain>DSM 19018 / LMG 30748 / EbN1</strain>
    </source>
</reference>
<comment type="function">
    <text evidence="1">The glycine cleavage system catalyzes the degradation of glycine. The H protein shuttles the methylamine group of glycine from the P protein to the T protein.</text>
</comment>
<comment type="cofactor">
    <cofactor evidence="1">
        <name>(R)-lipoate</name>
        <dbReference type="ChEBI" id="CHEBI:83088"/>
    </cofactor>
    <text evidence="1">Binds 1 lipoyl cofactor covalently.</text>
</comment>
<comment type="subunit">
    <text evidence="1">The glycine cleavage system is composed of four proteins: P, T, L and H.</text>
</comment>
<comment type="similarity">
    <text evidence="1">Belongs to the GcvH family.</text>
</comment>
<evidence type="ECO:0000255" key="1">
    <source>
        <dbReference type="HAMAP-Rule" id="MF_00272"/>
    </source>
</evidence>
<evidence type="ECO:0000255" key="2">
    <source>
        <dbReference type="PROSITE-ProRule" id="PRU01066"/>
    </source>
</evidence>
<feature type="chain" id="PRO_0000302346" description="Glycine cleavage system H protein">
    <location>
        <begin position="1"/>
        <end position="128"/>
    </location>
</feature>
<feature type="domain" description="Lipoyl-binding" evidence="2">
    <location>
        <begin position="24"/>
        <end position="105"/>
    </location>
</feature>
<feature type="modified residue" description="N6-lipoyllysine" evidence="1">
    <location>
        <position position="65"/>
    </location>
</feature>
<proteinExistence type="inferred from homology"/>
<keyword id="KW-0450">Lipoyl</keyword>
<keyword id="KW-1185">Reference proteome</keyword>
<sequence length="128" mass="13356">MSNVPAELKYTKSHEWIRVEADGSLTIGVTDHAQEALGDVVFLELPEAGRQLAAGEACAVIESVKAASDIYAPVDGEVIASNQDAVDAPESVNADAYAAWLFKLKPANAGDVAALLDAQGYQAEIANA</sequence>
<name>GCSH_AROAE</name>
<accession>Q5NZ92</accession>
<protein>
    <recommendedName>
        <fullName evidence="1">Glycine cleavage system H protein</fullName>
    </recommendedName>
</protein>
<gene>
    <name evidence="1" type="primary">gcvH</name>
    <name type="ordered locus">AZOSEA34970</name>
    <name type="ORF">ebB217</name>
</gene>
<dbReference type="EMBL" id="CR555306">
    <property type="protein sequence ID" value="CAI09622.1"/>
    <property type="molecule type" value="Genomic_DNA"/>
</dbReference>
<dbReference type="RefSeq" id="WP_011239281.1">
    <property type="nucleotide sequence ID" value="NC_006513.1"/>
</dbReference>
<dbReference type="SMR" id="Q5NZ92"/>
<dbReference type="STRING" id="76114.ebB217"/>
<dbReference type="KEGG" id="eba:ebB217"/>
<dbReference type="eggNOG" id="COG0509">
    <property type="taxonomic scope" value="Bacteria"/>
</dbReference>
<dbReference type="HOGENOM" id="CLU_097408_2_1_4"/>
<dbReference type="OrthoDB" id="9796712at2"/>
<dbReference type="Proteomes" id="UP000006552">
    <property type="component" value="Chromosome"/>
</dbReference>
<dbReference type="GO" id="GO:0005829">
    <property type="term" value="C:cytosol"/>
    <property type="evidence" value="ECO:0007669"/>
    <property type="project" value="TreeGrafter"/>
</dbReference>
<dbReference type="GO" id="GO:0005960">
    <property type="term" value="C:glycine cleavage complex"/>
    <property type="evidence" value="ECO:0007669"/>
    <property type="project" value="InterPro"/>
</dbReference>
<dbReference type="GO" id="GO:0019464">
    <property type="term" value="P:glycine decarboxylation via glycine cleavage system"/>
    <property type="evidence" value="ECO:0007669"/>
    <property type="project" value="UniProtKB-UniRule"/>
</dbReference>
<dbReference type="CDD" id="cd06848">
    <property type="entry name" value="GCS_H"/>
    <property type="match status" value="1"/>
</dbReference>
<dbReference type="Gene3D" id="2.40.50.100">
    <property type="match status" value="1"/>
</dbReference>
<dbReference type="HAMAP" id="MF_00272">
    <property type="entry name" value="GcvH"/>
    <property type="match status" value="1"/>
</dbReference>
<dbReference type="InterPro" id="IPR003016">
    <property type="entry name" value="2-oxoA_DH_lipoyl-BS"/>
</dbReference>
<dbReference type="InterPro" id="IPR000089">
    <property type="entry name" value="Biotin_lipoyl"/>
</dbReference>
<dbReference type="InterPro" id="IPR002930">
    <property type="entry name" value="GCV_H"/>
</dbReference>
<dbReference type="InterPro" id="IPR033753">
    <property type="entry name" value="GCV_H/Fam206"/>
</dbReference>
<dbReference type="InterPro" id="IPR017453">
    <property type="entry name" value="GCV_H_sub"/>
</dbReference>
<dbReference type="InterPro" id="IPR011053">
    <property type="entry name" value="Single_hybrid_motif"/>
</dbReference>
<dbReference type="NCBIfam" id="TIGR00527">
    <property type="entry name" value="gcvH"/>
    <property type="match status" value="1"/>
</dbReference>
<dbReference type="NCBIfam" id="NF002270">
    <property type="entry name" value="PRK01202.1"/>
    <property type="match status" value="1"/>
</dbReference>
<dbReference type="PANTHER" id="PTHR11715">
    <property type="entry name" value="GLYCINE CLEAVAGE SYSTEM H PROTEIN"/>
    <property type="match status" value="1"/>
</dbReference>
<dbReference type="PANTHER" id="PTHR11715:SF3">
    <property type="entry name" value="GLYCINE CLEAVAGE SYSTEM H PROTEIN-RELATED"/>
    <property type="match status" value="1"/>
</dbReference>
<dbReference type="Pfam" id="PF01597">
    <property type="entry name" value="GCV_H"/>
    <property type="match status" value="1"/>
</dbReference>
<dbReference type="SUPFAM" id="SSF51230">
    <property type="entry name" value="Single hybrid motif"/>
    <property type="match status" value="1"/>
</dbReference>
<dbReference type="PROSITE" id="PS50968">
    <property type="entry name" value="BIOTINYL_LIPOYL"/>
    <property type="match status" value="1"/>
</dbReference>
<dbReference type="PROSITE" id="PS00189">
    <property type="entry name" value="LIPOYL"/>
    <property type="match status" value="1"/>
</dbReference>